<organism>
    <name type="scientific">Desulfitobacterium hafniense (strain DSM 10664 / DCB-2)</name>
    <dbReference type="NCBI Taxonomy" id="272564"/>
    <lineage>
        <taxon>Bacteria</taxon>
        <taxon>Bacillati</taxon>
        <taxon>Bacillota</taxon>
        <taxon>Clostridia</taxon>
        <taxon>Eubacteriales</taxon>
        <taxon>Desulfitobacteriaceae</taxon>
        <taxon>Desulfitobacterium</taxon>
    </lineage>
</organism>
<comment type="function">
    <text evidence="1">The RuvA-RuvB-RuvC complex processes Holliday junction (HJ) DNA during genetic recombination and DNA repair, while the RuvA-RuvB complex plays an important role in the rescue of blocked DNA replication forks via replication fork reversal (RFR). RuvA specifically binds to HJ cruciform DNA, conferring on it an open structure. The RuvB hexamer acts as an ATP-dependent pump, pulling dsDNA into and through the RuvAB complex. RuvB forms 2 homohexamers on either side of HJ DNA bound by 1 or 2 RuvA tetramers; 4 subunits per hexamer contact DNA at a time. Coordinated motions by a converter formed by DNA-disengaged RuvB subunits stimulates ATP hydrolysis and nucleotide exchange. Immobilization of the converter enables RuvB to convert the ATP-contained energy into a lever motion, pulling 2 nucleotides of DNA out of the RuvA tetramer per ATP hydrolyzed, thus driving DNA branch migration. The RuvB motors rotate together with the DNA substrate, which together with the progressing nucleotide cycle form the mechanistic basis for DNA recombination by continuous HJ branch migration. Branch migration allows RuvC to scan DNA until it finds its consensus sequence, where it cleaves and resolves cruciform DNA.</text>
</comment>
<comment type="catalytic activity">
    <reaction evidence="1">
        <text>ATP + H2O = ADP + phosphate + H(+)</text>
        <dbReference type="Rhea" id="RHEA:13065"/>
        <dbReference type="ChEBI" id="CHEBI:15377"/>
        <dbReference type="ChEBI" id="CHEBI:15378"/>
        <dbReference type="ChEBI" id="CHEBI:30616"/>
        <dbReference type="ChEBI" id="CHEBI:43474"/>
        <dbReference type="ChEBI" id="CHEBI:456216"/>
    </reaction>
</comment>
<comment type="subunit">
    <text evidence="1">Homohexamer. Forms an RuvA(8)-RuvB(12)-Holliday junction (HJ) complex. HJ DNA is sandwiched between 2 RuvA tetramers; dsDNA enters through RuvA and exits via RuvB. An RuvB hexamer assembles on each DNA strand where it exits the tetramer. Each RuvB hexamer is contacted by two RuvA subunits (via domain III) on 2 adjacent RuvB subunits; this complex drives branch migration. In the full resolvosome a probable DNA-RuvA(4)-RuvB(12)-RuvC(2) complex forms which resolves the HJ.</text>
</comment>
<comment type="subcellular location">
    <subcellularLocation>
        <location evidence="1">Cytoplasm</location>
    </subcellularLocation>
</comment>
<comment type="domain">
    <text evidence="1">Has 3 domains, the large (RuvB-L) and small ATPase (RuvB-S) domains and the C-terminal head (RuvB-H) domain. The head domain binds DNA, while the ATPase domains jointly bind ATP, ADP or are empty depending on the state of the subunit in the translocation cycle. During a single DNA translocation step the structure of each domain remains the same, but their relative positions change.</text>
</comment>
<comment type="similarity">
    <text evidence="1">Belongs to the RuvB family.</text>
</comment>
<accession>B8FQV5</accession>
<feature type="chain" id="PRO_1000195218" description="Holliday junction branch migration complex subunit RuvB">
    <location>
        <begin position="1"/>
        <end position="348"/>
    </location>
</feature>
<feature type="region of interest" description="Large ATPase domain (RuvB-L)" evidence="1">
    <location>
        <begin position="1"/>
        <end position="181"/>
    </location>
</feature>
<feature type="region of interest" description="Small ATPAse domain (RuvB-S)" evidence="1">
    <location>
        <begin position="182"/>
        <end position="252"/>
    </location>
</feature>
<feature type="region of interest" description="Head domain (RuvB-H)" evidence="1">
    <location>
        <begin position="255"/>
        <end position="348"/>
    </location>
</feature>
<feature type="region of interest" description="Disordered" evidence="2">
    <location>
        <begin position="329"/>
        <end position="348"/>
    </location>
</feature>
<feature type="binding site" evidence="1">
    <location>
        <position position="20"/>
    </location>
    <ligand>
        <name>ATP</name>
        <dbReference type="ChEBI" id="CHEBI:30616"/>
    </ligand>
</feature>
<feature type="binding site" evidence="1">
    <location>
        <position position="21"/>
    </location>
    <ligand>
        <name>ATP</name>
        <dbReference type="ChEBI" id="CHEBI:30616"/>
    </ligand>
</feature>
<feature type="binding site" evidence="1">
    <location>
        <position position="62"/>
    </location>
    <ligand>
        <name>ATP</name>
        <dbReference type="ChEBI" id="CHEBI:30616"/>
    </ligand>
</feature>
<feature type="binding site" evidence="1">
    <location>
        <position position="65"/>
    </location>
    <ligand>
        <name>ATP</name>
        <dbReference type="ChEBI" id="CHEBI:30616"/>
    </ligand>
</feature>
<feature type="binding site" evidence="1">
    <location>
        <position position="66"/>
    </location>
    <ligand>
        <name>ATP</name>
        <dbReference type="ChEBI" id="CHEBI:30616"/>
    </ligand>
</feature>
<feature type="binding site" evidence="1">
    <location>
        <position position="66"/>
    </location>
    <ligand>
        <name>Mg(2+)</name>
        <dbReference type="ChEBI" id="CHEBI:18420"/>
    </ligand>
</feature>
<feature type="binding site" evidence="1">
    <location>
        <position position="67"/>
    </location>
    <ligand>
        <name>ATP</name>
        <dbReference type="ChEBI" id="CHEBI:30616"/>
    </ligand>
</feature>
<feature type="binding site" evidence="1">
    <location>
        <position position="171"/>
    </location>
    <ligand>
        <name>ATP</name>
        <dbReference type="ChEBI" id="CHEBI:30616"/>
    </ligand>
</feature>
<feature type="binding site" evidence="1">
    <location>
        <position position="181"/>
    </location>
    <ligand>
        <name>ATP</name>
        <dbReference type="ChEBI" id="CHEBI:30616"/>
    </ligand>
</feature>
<feature type="binding site" evidence="1">
    <location>
        <position position="218"/>
    </location>
    <ligand>
        <name>ATP</name>
        <dbReference type="ChEBI" id="CHEBI:30616"/>
    </ligand>
</feature>
<feature type="binding site" evidence="1">
    <location>
        <position position="310"/>
    </location>
    <ligand>
        <name>DNA</name>
        <dbReference type="ChEBI" id="CHEBI:16991"/>
    </ligand>
</feature>
<feature type="binding site" evidence="1">
    <location>
        <position position="315"/>
    </location>
    <ligand>
        <name>DNA</name>
        <dbReference type="ChEBI" id="CHEBI:16991"/>
    </ligand>
</feature>
<sequence length="348" mass="38306">MEERMITPQQLPGDQEGEVLRPHRLADYIGQTKVKDNLQIFIQAALARGEALDHVLLYGPPGLGKTTLANIIATEMEVNIRTTSGPAIERPGDLAAILTSLEPRDVLFIDEIHRLSRTTEEILYSAMEDGCLDIVIGKGPSARSIRLTLPPFTLVGATTRAGQLASPLRDRFGVISRLEFYEVEDLIRIITRAAGILNLQITLEGASEIARRSRGTPRVANRLLKRVRDYAQVWEDGRVTQELAGKSLDRLEVDPAGLDRIDQKCLLTIIQMFAGGPVGLETLSATIGEEAETIEDVVEPYLLQQGFIQRTPRGRVATVRAYQHLNIPVNSSHQEGGQGDSLFDAAED</sequence>
<name>RUVB_DESHD</name>
<gene>
    <name evidence="1" type="primary">ruvB</name>
    <name type="ordered locus">Dhaf_3625</name>
</gene>
<protein>
    <recommendedName>
        <fullName evidence="1">Holliday junction branch migration complex subunit RuvB</fullName>
        <ecNumber evidence="1">3.6.4.-</ecNumber>
    </recommendedName>
</protein>
<dbReference type="EC" id="3.6.4.-" evidence="1"/>
<dbReference type="EMBL" id="CP001336">
    <property type="protein sequence ID" value="ACL21642.1"/>
    <property type="molecule type" value="Genomic_DNA"/>
</dbReference>
<dbReference type="RefSeq" id="WP_005810736.1">
    <property type="nucleotide sequence ID" value="NC_011830.1"/>
</dbReference>
<dbReference type="SMR" id="B8FQV5"/>
<dbReference type="KEGG" id="dhd:Dhaf_3625"/>
<dbReference type="HOGENOM" id="CLU_055599_1_0_9"/>
<dbReference type="Proteomes" id="UP000007726">
    <property type="component" value="Chromosome"/>
</dbReference>
<dbReference type="GO" id="GO:0005737">
    <property type="term" value="C:cytoplasm"/>
    <property type="evidence" value="ECO:0007669"/>
    <property type="project" value="UniProtKB-SubCell"/>
</dbReference>
<dbReference type="GO" id="GO:0048476">
    <property type="term" value="C:Holliday junction resolvase complex"/>
    <property type="evidence" value="ECO:0007669"/>
    <property type="project" value="UniProtKB-UniRule"/>
</dbReference>
<dbReference type="GO" id="GO:0005524">
    <property type="term" value="F:ATP binding"/>
    <property type="evidence" value="ECO:0007669"/>
    <property type="project" value="UniProtKB-UniRule"/>
</dbReference>
<dbReference type="GO" id="GO:0016887">
    <property type="term" value="F:ATP hydrolysis activity"/>
    <property type="evidence" value="ECO:0007669"/>
    <property type="project" value="InterPro"/>
</dbReference>
<dbReference type="GO" id="GO:0000400">
    <property type="term" value="F:four-way junction DNA binding"/>
    <property type="evidence" value="ECO:0007669"/>
    <property type="project" value="UniProtKB-UniRule"/>
</dbReference>
<dbReference type="GO" id="GO:0009378">
    <property type="term" value="F:four-way junction helicase activity"/>
    <property type="evidence" value="ECO:0007669"/>
    <property type="project" value="InterPro"/>
</dbReference>
<dbReference type="GO" id="GO:0006310">
    <property type="term" value="P:DNA recombination"/>
    <property type="evidence" value="ECO:0007669"/>
    <property type="project" value="UniProtKB-UniRule"/>
</dbReference>
<dbReference type="GO" id="GO:0006281">
    <property type="term" value="P:DNA repair"/>
    <property type="evidence" value="ECO:0007669"/>
    <property type="project" value="UniProtKB-UniRule"/>
</dbReference>
<dbReference type="CDD" id="cd00009">
    <property type="entry name" value="AAA"/>
    <property type="match status" value="1"/>
</dbReference>
<dbReference type="Gene3D" id="1.10.8.60">
    <property type="match status" value="1"/>
</dbReference>
<dbReference type="Gene3D" id="3.40.50.300">
    <property type="entry name" value="P-loop containing nucleotide triphosphate hydrolases"/>
    <property type="match status" value="1"/>
</dbReference>
<dbReference type="Gene3D" id="1.10.10.10">
    <property type="entry name" value="Winged helix-like DNA-binding domain superfamily/Winged helix DNA-binding domain"/>
    <property type="match status" value="1"/>
</dbReference>
<dbReference type="HAMAP" id="MF_00016">
    <property type="entry name" value="DNA_HJ_migration_RuvB"/>
    <property type="match status" value="1"/>
</dbReference>
<dbReference type="InterPro" id="IPR003593">
    <property type="entry name" value="AAA+_ATPase"/>
</dbReference>
<dbReference type="InterPro" id="IPR041445">
    <property type="entry name" value="AAA_lid_4"/>
</dbReference>
<dbReference type="InterPro" id="IPR004605">
    <property type="entry name" value="DNA_helicase_Holl-junc_RuvB"/>
</dbReference>
<dbReference type="InterPro" id="IPR027417">
    <property type="entry name" value="P-loop_NTPase"/>
</dbReference>
<dbReference type="InterPro" id="IPR008824">
    <property type="entry name" value="RuvB-like_N"/>
</dbReference>
<dbReference type="InterPro" id="IPR008823">
    <property type="entry name" value="RuvB_C"/>
</dbReference>
<dbReference type="InterPro" id="IPR036388">
    <property type="entry name" value="WH-like_DNA-bd_sf"/>
</dbReference>
<dbReference type="InterPro" id="IPR036390">
    <property type="entry name" value="WH_DNA-bd_sf"/>
</dbReference>
<dbReference type="NCBIfam" id="NF000868">
    <property type="entry name" value="PRK00080.1"/>
    <property type="match status" value="1"/>
</dbReference>
<dbReference type="NCBIfam" id="TIGR00635">
    <property type="entry name" value="ruvB"/>
    <property type="match status" value="1"/>
</dbReference>
<dbReference type="PANTHER" id="PTHR42848">
    <property type="match status" value="1"/>
</dbReference>
<dbReference type="PANTHER" id="PTHR42848:SF1">
    <property type="entry name" value="HOLLIDAY JUNCTION BRANCH MIGRATION COMPLEX SUBUNIT RUVB"/>
    <property type="match status" value="1"/>
</dbReference>
<dbReference type="Pfam" id="PF17864">
    <property type="entry name" value="AAA_lid_4"/>
    <property type="match status" value="1"/>
</dbReference>
<dbReference type="Pfam" id="PF05491">
    <property type="entry name" value="RuvB_C"/>
    <property type="match status" value="1"/>
</dbReference>
<dbReference type="Pfam" id="PF05496">
    <property type="entry name" value="RuvB_N"/>
    <property type="match status" value="1"/>
</dbReference>
<dbReference type="SMART" id="SM00382">
    <property type="entry name" value="AAA"/>
    <property type="match status" value="1"/>
</dbReference>
<dbReference type="SUPFAM" id="SSF52540">
    <property type="entry name" value="P-loop containing nucleoside triphosphate hydrolases"/>
    <property type="match status" value="1"/>
</dbReference>
<dbReference type="SUPFAM" id="SSF46785">
    <property type="entry name" value="Winged helix' DNA-binding domain"/>
    <property type="match status" value="1"/>
</dbReference>
<reference key="1">
    <citation type="journal article" date="2012" name="BMC Microbiol.">
        <title>Genome sequence of Desulfitobacterium hafniense DCB-2, a Gram-positive anaerobe capable of dehalogenation and metal reduction.</title>
        <authorList>
            <person name="Kim S.H."/>
            <person name="Harzman C."/>
            <person name="Davis J.K."/>
            <person name="Hutcheson R."/>
            <person name="Broderick J.B."/>
            <person name="Marsh T.L."/>
            <person name="Tiedje J.M."/>
        </authorList>
    </citation>
    <scope>NUCLEOTIDE SEQUENCE [LARGE SCALE GENOMIC DNA]</scope>
    <source>
        <strain>DSM 10664 / DCB-2</strain>
    </source>
</reference>
<evidence type="ECO:0000255" key="1">
    <source>
        <dbReference type="HAMAP-Rule" id="MF_00016"/>
    </source>
</evidence>
<evidence type="ECO:0000256" key="2">
    <source>
        <dbReference type="SAM" id="MobiDB-lite"/>
    </source>
</evidence>
<proteinExistence type="inferred from homology"/>
<keyword id="KW-0067">ATP-binding</keyword>
<keyword id="KW-0963">Cytoplasm</keyword>
<keyword id="KW-0227">DNA damage</keyword>
<keyword id="KW-0233">DNA recombination</keyword>
<keyword id="KW-0234">DNA repair</keyword>
<keyword id="KW-0238">DNA-binding</keyword>
<keyword id="KW-0378">Hydrolase</keyword>
<keyword id="KW-0547">Nucleotide-binding</keyword>